<gene>
    <name type="primary">NECAP2</name>
</gene>
<comment type="function">
    <text evidence="1">Involved in endocytosis.</text>
</comment>
<comment type="subunit">
    <text evidence="1">Interacts with AP1G1 and AP2A1 components of the adapter protein complexes AP-1 and AP-2. Interacts with the GAE domain proteins GGA1, GGA2 and GGA3 (By similarity).</text>
</comment>
<comment type="subcellular location">
    <subcellularLocation>
        <location evidence="1">Cytoplasmic vesicle</location>
        <location evidence="1">Clathrin-coated vesicle membrane</location>
    </subcellularLocation>
    <subcellularLocation>
        <location evidence="1">Cell membrane</location>
    </subcellularLocation>
    <text evidence="1">Colocalizes with AP-2 at the plasma membrane.</text>
</comment>
<comment type="domain">
    <text evidence="1">The WXXF motifs mediate binding of accessory proteins to the ear-domain of AP-1, GGAs and AP-2 through hydrophobic interactions. Selective binding to the GAE domains of AP-1 or to the alpha-ear domain of AP-2 is tuned by the acidic context surrounding the motif and the properties of the second residue of the motif itself (By similarity).</text>
</comment>
<comment type="similarity">
    <text evidence="4">Belongs to the NECAP family.</text>
</comment>
<proteinExistence type="evidence at transcript level"/>
<protein>
    <recommendedName>
        <fullName>Adaptin ear-binding coat-associated protein 2</fullName>
    </recommendedName>
    <alternativeName>
        <fullName>NECAP endocytosis-associated protein 2</fullName>
        <shortName>NECAP-2</shortName>
    </alternativeName>
</protein>
<keyword id="KW-1003">Cell membrane</keyword>
<keyword id="KW-0968">Cytoplasmic vesicle</keyword>
<keyword id="KW-0254">Endocytosis</keyword>
<keyword id="KW-0472">Membrane</keyword>
<keyword id="KW-0597">Phosphoprotein</keyword>
<keyword id="KW-0653">Protein transport</keyword>
<keyword id="KW-1185">Reference proteome</keyword>
<keyword id="KW-0677">Repeat</keyword>
<keyword id="KW-0813">Transport</keyword>
<organism>
    <name type="scientific">Bos taurus</name>
    <name type="common">Bovine</name>
    <dbReference type="NCBI Taxonomy" id="9913"/>
    <lineage>
        <taxon>Eukaryota</taxon>
        <taxon>Metazoa</taxon>
        <taxon>Chordata</taxon>
        <taxon>Craniata</taxon>
        <taxon>Vertebrata</taxon>
        <taxon>Euteleostomi</taxon>
        <taxon>Mammalia</taxon>
        <taxon>Eutheria</taxon>
        <taxon>Laurasiatheria</taxon>
        <taxon>Artiodactyla</taxon>
        <taxon>Ruminantia</taxon>
        <taxon>Pecora</taxon>
        <taxon>Bovidae</taxon>
        <taxon>Bovinae</taxon>
        <taxon>Bos</taxon>
    </lineage>
</organism>
<feature type="chain" id="PRO_0000283723" description="Adaptin ear-binding coat-associated protein 2">
    <location>
        <begin position="1"/>
        <end position="266"/>
    </location>
</feature>
<feature type="region of interest" description="Disordered" evidence="3">
    <location>
        <begin position="164"/>
        <end position="191"/>
    </location>
</feature>
<feature type="region of interest" description="Disordered" evidence="3">
    <location>
        <begin position="244"/>
        <end position="266"/>
    </location>
</feature>
<feature type="short sequence motif" description="WXXF motif 1">
    <location>
        <begin position="243"/>
        <end position="246"/>
    </location>
</feature>
<feature type="short sequence motif" description="WXXF motif 2">
    <location>
        <begin position="263"/>
        <end position="266"/>
    </location>
</feature>
<feature type="compositionally biased region" description="Low complexity" evidence="3">
    <location>
        <begin position="247"/>
        <end position="258"/>
    </location>
</feature>
<feature type="modified residue" description="Phosphoserine" evidence="2">
    <location>
        <position position="181"/>
    </location>
</feature>
<dbReference type="EMBL" id="BT020866">
    <property type="protein sequence ID" value="AAX08883.1"/>
    <property type="molecule type" value="mRNA"/>
</dbReference>
<dbReference type="EMBL" id="BC109915">
    <property type="protein sequence ID" value="AAI09916.1"/>
    <property type="molecule type" value="mRNA"/>
</dbReference>
<dbReference type="RefSeq" id="NP_001015562.1">
    <property type="nucleotide sequence ID" value="NM_001015562.1"/>
</dbReference>
<dbReference type="SMR" id="Q5E9Q4"/>
<dbReference type="FunCoup" id="Q5E9Q4">
    <property type="interactions" value="4266"/>
</dbReference>
<dbReference type="STRING" id="9913.ENSBTAP00000059916"/>
<dbReference type="PaxDb" id="9913-ENSBTAP00000017663"/>
<dbReference type="GeneID" id="509439"/>
<dbReference type="KEGG" id="bta:509439"/>
<dbReference type="CTD" id="55707"/>
<dbReference type="eggNOG" id="KOG2500">
    <property type="taxonomic scope" value="Eukaryota"/>
</dbReference>
<dbReference type="HOGENOM" id="CLU_069884_1_0_1"/>
<dbReference type="InParanoid" id="Q5E9Q4"/>
<dbReference type="OrthoDB" id="10265489at2759"/>
<dbReference type="TreeFam" id="TF314482"/>
<dbReference type="Proteomes" id="UP000009136">
    <property type="component" value="Unplaced"/>
</dbReference>
<dbReference type="GO" id="GO:0030125">
    <property type="term" value="C:clathrin vesicle coat"/>
    <property type="evidence" value="ECO:0000318"/>
    <property type="project" value="GO_Central"/>
</dbReference>
<dbReference type="GO" id="GO:0005886">
    <property type="term" value="C:plasma membrane"/>
    <property type="evidence" value="ECO:0007669"/>
    <property type="project" value="UniProtKB-SubCell"/>
</dbReference>
<dbReference type="GO" id="GO:0006897">
    <property type="term" value="P:endocytosis"/>
    <property type="evidence" value="ECO:0007669"/>
    <property type="project" value="UniProtKB-KW"/>
</dbReference>
<dbReference type="GO" id="GO:0015031">
    <property type="term" value="P:protein transport"/>
    <property type="evidence" value="ECO:0007669"/>
    <property type="project" value="UniProtKB-KW"/>
</dbReference>
<dbReference type="GO" id="GO:0016192">
    <property type="term" value="P:vesicle-mediated transport"/>
    <property type="evidence" value="ECO:0000318"/>
    <property type="project" value="GO_Central"/>
</dbReference>
<dbReference type="CDD" id="cd13228">
    <property type="entry name" value="PHear_NECAP"/>
    <property type="match status" value="1"/>
</dbReference>
<dbReference type="FunFam" id="2.30.29.30:FF:000064">
    <property type="entry name" value="Adaptin ear-binding coat-associated protein 1"/>
    <property type="match status" value="1"/>
</dbReference>
<dbReference type="Gene3D" id="2.30.29.30">
    <property type="entry name" value="Pleckstrin-homology domain (PH domain)/Phosphotyrosine-binding domain (PTB)"/>
    <property type="match status" value="1"/>
</dbReference>
<dbReference type="InterPro" id="IPR012466">
    <property type="entry name" value="NECAP_PHear"/>
</dbReference>
<dbReference type="InterPro" id="IPR011993">
    <property type="entry name" value="PH-like_dom_sf"/>
</dbReference>
<dbReference type="PANTHER" id="PTHR12847:SF16">
    <property type="entry name" value="ADAPTIN EAR-BINDING COAT-ASSOCIATED PROTEIN 2"/>
    <property type="match status" value="1"/>
</dbReference>
<dbReference type="PANTHER" id="PTHR12847">
    <property type="entry name" value="ATP-BINDING CASSETTE ABC TRANSPORTER-RELATED"/>
    <property type="match status" value="1"/>
</dbReference>
<dbReference type="Pfam" id="PF07933">
    <property type="entry name" value="DUF1681"/>
    <property type="match status" value="1"/>
</dbReference>
<dbReference type="SUPFAM" id="SSF50729">
    <property type="entry name" value="PH domain-like"/>
    <property type="match status" value="1"/>
</dbReference>
<accession>Q5E9Q4</accession>
<reference key="1">
    <citation type="journal article" date="2005" name="BMC Genomics">
        <title>Characterization of 954 bovine full-CDS cDNA sequences.</title>
        <authorList>
            <person name="Harhay G.P."/>
            <person name="Sonstegard T.S."/>
            <person name="Keele J.W."/>
            <person name="Heaton M.P."/>
            <person name="Clawson M.L."/>
            <person name="Snelling W.M."/>
            <person name="Wiedmann R.T."/>
            <person name="Van Tassell C.P."/>
            <person name="Smith T.P.L."/>
        </authorList>
    </citation>
    <scope>NUCLEOTIDE SEQUENCE [LARGE SCALE MRNA]</scope>
</reference>
<reference key="2">
    <citation type="submission" date="2005-11" db="EMBL/GenBank/DDBJ databases">
        <authorList>
            <consortium name="NIH - Mammalian Gene Collection (MGC) project"/>
        </authorList>
    </citation>
    <scope>NUCLEOTIDE SEQUENCE [LARGE SCALE MRNA]</scope>
    <source>
        <strain>Crossbred X Angus</strain>
        <tissue>Liver</tissue>
    </source>
</reference>
<sequence>MEEAEYESVLCVKPDVHVYRIPPRATNRGYRAAEWQLDQPSWSGRLRITAKGQVAYIKLEDRTSGELFAQAPVDQFPGTAVESVTDSSRYFVIRIEDGNGRRAFIGIGFGDRGDAFDFNVALQDHFKWVKQQCEFAKQAQNPDQGPKLDLSFKEGQTIKLNIASMKKKDGAAGTPRARPTSTGGLSLLPPPPGAKTAALAPLSGEHLSVGGSVVQPAVSPSSGGATVSWPQPKPATTATADIWGDFTKSTGSTSSQTQPGAGWVQF</sequence>
<evidence type="ECO:0000250" key="1"/>
<evidence type="ECO:0000250" key="2">
    <source>
        <dbReference type="UniProtKB" id="Q9NVZ3"/>
    </source>
</evidence>
<evidence type="ECO:0000256" key="3">
    <source>
        <dbReference type="SAM" id="MobiDB-lite"/>
    </source>
</evidence>
<evidence type="ECO:0000305" key="4"/>
<name>NECP2_BOVIN</name>